<organism>
    <name type="scientific">Pseudomonas aeruginosa (strain UCBPP-PA14)</name>
    <dbReference type="NCBI Taxonomy" id="208963"/>
    <lineage>
        <taxon>Bacteria</taxon>
        <taxon>Pseudomonadati</taxon>
        <taxon>Pseudomonadota</taxon>
        <taxon>Gammaproteobacteria</taxon>
        <taxon>Pseudomonadales</taxon>
        <taxon>Pseudomonadaceae</taxon>
        <taxon>Pseudomonas</taxon>
    </lineage>
</organism>
<proteinExistence type="inferred from homology"/>
<protein>
    <recommendedName>
        <fullName evidence="1">Large ribosomal subunit protein bL35</fullName>
    </recommendedName>
    <alternativeName>
        <fullName evidence="3">50S ribosomal protein L35</fullName>
    </alternativeName>
</protein>
<reference key="1">
    <citation type="journal article" date="2006" name="Genome Biol.">
        <title>Genomic analysis reveals that Pseudomonas aeruginosa virulence is combinatorial.</title>
        <authorList>
            <person name="Lee D.G."/>
            <person name="Urbach J.M."/>
            <person name="Wu G."/>
            <person name="Liberati N.T."/>
            <person name="Feinbaum R.L."/>
            <person name="Miyata S."/>
            <person name="Diggins L.T."/>
            <person name="He J."/>
            <person name="Saucier M."/>
            <person name="Deziel E."/>
            <person name="Friedman L."/>
            <person name="Li L."/>
            <person name="Grills G."/>
            <person name="Montgomery K."/>
            <person name="Kucherlapati R."/>
            <person name="Rahme L.G."/>
            <person name="Ausubel F.M."/>
        </authorList>
    </citation>
    <scope>NUCLEOTIDE SEQUENCE [LARGE SCALE GENOMIC DNA]</scope>
    <source>
        <strain>UCBPP-PA14</strain>
    </source>
</reference>
<feature type="chain" id="PRO_1000050745" description="Large ribosomal subunit protein bL35">
    <location>
        <begin position="1"/>
        <end position="64"/>
    </location>
</feature>
<feature type="region of interest" description="Disordered" evidence="2">
    <location>
        <begin position="1"/>
        <end position="64"/>
    </location>
</feature>
<feature type="compositionally biased region" description="Basic residues" evidence="2">
    <location>
        <begin position="1"/>
        <end position="28"/>
    </location>
</feature>
<feature type="compositionally biased region" description="Basic and acidic residues" evidence="2">
    <location>
        <begin position="53"/>
        <end position="64"/>
    </location>
</feature>
<evidence type="ECO:0000255" key="1">
    <source>
        <dbReference type="HAMAP-Rule" id="MF_00514"/>
    </source>
</evidence>
<evidence type="ECO:0000256" key="2">
    <source>
        <dbReference type="SAM" id="MobiDB-lite"/>
    </source>
</evidence>
<evidence type="ECO:0000305" key="3"/>
<comment type="similarity">
    <text evidence="1">Belongs to the bacterial ribosomal protein bL35 family.</text>
</comment>
<gene>
    <name evidence="1" type="primary">rpmI</name>
    <name type="ordered locus">PA14_28670</name>
</gene>
<accession>Q02NN9</accession>
<name>RL35_PSEAB</name>
<keyword id="KW-0687">Ribonucleoprotein</keyword>
<keyword id="KW-0689">Ribosomal protein</keyword>
<dbReference type="EMBL" id="CP000438">
    <property type="protein sequence ID" value="ABJ11968.1"/>
    <property type="molecule type" value="Genomic_DNA"/>
</dbReference>
<dbReference type="RefSeq" id="WP_003090673.1">
    <property type="nucleotide sequence ID" value="NZ_CP034244.1"/>
</dbReference>
<dbReference type="SMR" id="Q02NN9"/>
<dbReference type="GeneID" id="77220769"/>
<dbReference type="KEGG" id="pau:PA14_28670"/>
<dbReference type="PseudoCAP" id="PA14_28670"/>
<dbReference type="HOGENOM" id="CLU_169643_1_1_6"/>
<dbReference type="BioCyc" id="PAER208963:G1G74-2398-MONOMER"/>
<dbReference type="Proteomes" id="UP000000653">
    <property type="component" value="Chromosome"/>
</dbReference>
<dbReference type="GO" id="GO:0022625">
    <property type="term" value="C:cytosolic large ribosomal subunit"/>
    <property type="evidence" value="ECO:0007669"/>
    <property type="project" value="TreeGrafter"/>
</dbReference>
<dbReference type="GO" id="GO:0003735">
    <property type="term" value="F:structural constituent of ribosome"/>
    <property type="evidence" value="ECO:0007669"/>
    <property type="project" value="InterPro"/>
</dbReference>
<dbReference type="GO" id="GO:0006412">
    <property type="term" value="P:translation"/>
    <property type="evidence" value="ECO:0007669"/>
    <property type="project" value="UniProtKB-UniRule"/>
</dbReference>
<dbReference type="FunFam" id="4.10.410.60:FF:000001">
    <property type="entry name" value="50S ribosomal protein L35"/>
    <property type="match status" value="1"/>
</dbReference>
<dbReference type="Gene3D" id="4.10.410.60">
    <property type="match status" value="1"/>
</dbReference>
<dbReference type="HAMAP" id="MF_00514">
    <property type="entry name" value="Ribosomal_bL35"/>
    <property type="match status" value="1"/>
</dbReference>
<dbReference type="InterPro" id="IPR001706">
    <property type="entry name" value="Ribosomal_bL35"/>
</dbReference>
<dbReference type="InterPro" id="IPR021137">
    <property type="entry name" value="Ribosomal_bL35-like"/>
</dbReference>
<dbReference type="InterPro" id="IPR018265">
    <property type="entry name" value="Ribosomal_bL35_CS"/>
</dbReference>
<dbReference type="InterPro" id="IPR037229">
    <property type="entry name" value="Ribosomal_bL35_sf"/>
</dbReference>
<dbReference type="NCBIfam" id="TIGR00001">
    <property type="entry name" value="rpmI_bact"/>
    <property type="match status" value="1"/>
</dbReference>
<dbReference type="PANTHER" id="PTHR33343">
    <property type="entry name" value="54S RIBOSOMAL PROTEIN BL35M"/>
    <property type="match status" value="1"/>
</dbReference>
<dbReference type="PANTHER" id="PTHR33343:SF1">
    <property type="entry name" value="LARGE RIBOSOMAL SUBUNIT PROTEIN BL35M"/>
    <property type="match status" value="1"/>
</dbReference>
<dbReference type="Pfam" id="PF01632">
    <property type="entry name" value="Ribosomal_L35p"/>
    <property type="match status" value="1"/>
</dbReference>
<dbReference type="PRINTS" id="PR00064">
    <property type="entry name" value="RIBOSOMALL35"/>
</dbReference>
<dbReference type="SUPFAM" id="SSF143034">
    <property type="entry name" value="L35p-like"/>
    <property type="match status" value="1"/>
</dbReference>
<dbReference type="PROSITE" id="PS00936">
    <property type="entry name" value="RIBOSOMAL_L35"/>
    <property type="match status" value="1"/>
</dbReference>
<sequence length="64" mass="7364">MPKMKTKSGAAKRFKKTAGGLKHKHAFKSHILTKMTTKRKRQLRGTSMLNKSDVARVERSLRLR</sequence>